<sequence>MAPNAADKCPVMNNTGEKCPVMSSSTQSRGPRDIYTLEALSHFNREKIPERAVHAKGTGAYGEFEVTADISDICNIDMLLGVGKKTQCVTRFSTTGLERGSSDGVRDLKGMAVKFFTEQGDWDWVSLNFPFFFIRDPAKFPDMIHSQRRDPQTNLLNPNMTWDFVTKNPEALHMTLLQHSDFGTMFTWRTLSSYVGHAFKWVMPDGSFKYVHFFLASDRGPNFTDGSTAKVDPNDPDFATKDLFEAIERGDYPSWTANVQVVDPKDAPKLGFNILDLTKHWNLGTYPKGLDTIPSRPFGKLTLNRNVKDYFSEVEKLAFSPSNLVPGVEPSEDPILQARMFAYPDAQRYRLGIDHLKAPLRRKETACQHDLGPEFEKWLSQVTSEAWSHPHEDDYKFAREYYEVLPEFRSQEFQDRMVENLCKSIAPGPEELRKRVYDTFELVSSELARRLREGAEAIVAEKARPDSPSRAQPGQLRL</sequence>
<protein>
    <recommendedName>
        <fullName evidence="4">Catalase easC</fullName>
        <ecNumber evidence="6">1.11.-.-</ecNumber>
    </recommendedName>
    <alternativeName>
        <fullName evidence="4">Ergot alkaloid synthesis protein C</fullName>
    </alternativeName>
</protein>
<keyword id="KW-0017">Alkaloid metabolism</keyword>
<keyword id="KW-0349">Heme</keyword>
<keyword id="KW-0376">Hydrogen peroxide</keyword>
<keyword id="KW-0408">Iron</keyword>
<keyword id="KW-0479">Metal-binding</keyword>
<keyword id="KW-0560">Oxidoreductase</keyword>
<keyword id="KW-0575">Peroxidase</keyword>
<keyword id="KW-1185">Reference proteome</keyword>
<proteinExistence type="inferred from homology"/>
<reference key="1">
    <citation type="journal article" date="2011" name="Genome Biol.">
        <title>Comparative and functional genomics provide insights into the pathogenicity of dermatophytic fungi.</title>
        <authorList>
            <person name="Burmester A."/>
            <person name="Shelest E."/>
            <person name="Gloeckner G."/>
            <person name="Heddergott C."/>
            <person name="Schindler S."/>
            <person name="Staib P."/>
            <person name="Heidel A."/>
            <person name="Felder M."/>
            <person name="Petzold A."/>
            <person name="Szafranski K."/>
            <person name="Feuermann M."/>
            <person name="Pedruzzi I."/>
            <person name="Priebe S."/>
            <person name="Groth M."/>
            <person name="Winkler R."/>
            <person name="Li W."/>
            <person name="Kniemeyer O."/>
            <person name="Schroeckh V."/>
            <person name="Hertweck C."/>
            <person name="Hube B."/>
            <person name="White T.C."/>
            <person name="Platzer M."/>
            <person name="Guthke R."/>
            <person name="Heitman J."/>
            <person name="Woestemeyer J."/>
            <person name="Zipfel P.F."/>
            <person name="Monod M."/>
            <person name="Brakhage A.A."/>
        </authorList>
    </citation>
    <scope>NUCLEOTIDE SEQUENCE [LARGE SCALE GENOMIC DNA]</scope>
    <source>
        <strain>ATCC MYA-4681 / CBS 112371</strain>
    </source>
</reference>
<reference key="2">
    <citation type="journal article" date="2012" name="Microbiology">
        <title>Genome mining reveals the presence of a conserved gene cluster for the biosynthesis of ergot alkaloid precursors in the fungal family Arthrodermataceae.</title>
        <authorList>
            <person name="Wallwey C."/>
            <person name="Heddergott C."/>
            <person name="Xie X."/>
            <person name="Brakhage A.A."/>
            <person name="Li S.M."/>
        </authorList>
    </citation>
    <scope>FUNCTION</scope>
</reference>
<gene>
    <name evidence="4" type="primary">easC</name>
    <name type="ORF">ARB_04645</name>
</gene>
<dbReference type="EC" id="1.11.-.-" evidence="6"/>
<dbReference type="EMBL" id="ABSU01000001">
    <property type="protein sequence ID" value="EFE37117.1"/>
    <property type="molecule type" value="Genomic_DNA"/>
</dbReference>
<dbReference type="RefSeq" id="XP_003017762.1">
    <property type="nucleotide sequence ID" value="XM_003017716.1"/>
</dbReference>
<dbReference type="SMR" id="D4AK44"/>
<dbReference type="STRING" id="663331.D4AK44"/>
<dbReference type="GeneID" id="9522608"/>
<dbReference type="KEGG" id="abe:ARB_04645"/>
<dbReference type="eggNOG" id="KOG0047">
    <property type="taxonomic scope" value="Eukaryota"/>
</dbReference>
<dbReference type="HOGENOM" id="CLU_010645_2_0_1"/>
<dbReference type="OMA" id="GSFKYVH"/>
<dbReference type="OrthoDB" id="6880011at2759"/>
<dbReference type="UniPathway" id="UPA00327"/>
<dbReference type="Proteomes" id="UP000008866">
    <property type="component" value="Unassembled WGS sequence"/>
</dbReference>
<dbReference type="GO" id="GO:0005739">
    <property type="term" value="C:mitochondrion"/>
    <property type="evidence" value="ECO:0007669"/>
    <property type="project" value="TreeGrafter"/>
</dbReference>
<dbReference type="GO" id="GO:0005777">
    <property type="term" value="C:peroxisome"/>
    <property type="evidence" value="ECO:0007669"/>
    <property type="project" value="TreeGrafter"/>
</dbReference>
<dbReference type="GO" id="GO:0004096">
    <property type="term" value="F:catalase activity"/>
    <property type="evidence" value="ECO:0007669"/>
    <property type="project" value="InterPro"/>
</dbReference>
<dbReference type="GO" id="GO:0020037">
    <property type="term" value="F:heme binding"/>
    <property type="evidence" value="ECO:0007669"/>
    <property type="project" value="InterPro"/>
</dbReference>
<dbReference type="GO" id="GO:0046872">
    <property type="term" value="F:metal ion binding"/>
    <property type="evidence" value="ECO:0007669"/>
    <property type="project" value="UniProtKB-KW"/>
</dbReference>
<dbReference type="GO" id="GO:0042744">
    <property type="term" value="P:hydrogen peroxide catabolic process"/>
    <property type="evidence" value="ECO:0007669"/>
    <property type="project" value="UniProtKB-KW"/>
</dbReference>
<dbReference type="GO" id="GO:0035835">
    <property type="term" value="P:indole alkaloid biosynthetic process"/>
    <property type="evidence" value="ECO:0007669"/>
    <property type="project" value="UniProtKB-UniPathway"/>
</dbReference>
<dbReference type="GO" id="GO:0042542">
    <property type="term" value="P:response to hydrogen peroxide"/>
    <property type="evidence" value="ECO:0007669"/>
    <property type="project" value="TreeGrafter"/>
</dbReference>
<dbReference type="Gene3D" id="2.40.180.10">
    <property type="entry name" value="Catalase core domain"/>
    <property type="match status" value="1"/>
</dbReference>
<dbReference type="InterPro" id="IPR018028">
    <property type="entry name" value="Catalase"/>
</dbReference>
<dbReference type="InterPro" id="IPR024708">
    <property type="entry name" value="Catalase_AS"/>
</dbReference>
<dbReference type="InterPro" id="IPR024711">
    <property type="entry name" value="Catalase_clade1/3"/>
</dbReference>
<dbReference type="InterPro" id="IPR011614">
    <property type="entry name" value="Catalase_core"/>
</dbReference>
<dbReference type="InterPro" id="IPR002226">
    <property type="entry name" value="Catalase_haem_BS"/>
</dbReference>
<dbReference type="InterPro" id="IPR020835">
    <property type="entry name" value="Catalase_sf"/>
</dbReference>
<dbReference type="PANTHER" id="PTHR11465">
    <property type="entry name" value="CATALASE"/>
    <property type="match status" value="1"/>
</dbReference>
<dbReference type="PANTHER" id="PTHR11465:SF9">
    <property type="entry name" value="CATALASE"/>
    <property type="match status" value="1"/>
</dbReference>
<dbReference type="Pfam" id="PF00199">
    <property type="entry name" value="Catalase"/>
    <property type="match status" value="1"/>
</dbReference>
<dbReference type="PIRSF" id="PIRSF038928">
    <property type="entry name" value="Catalase_clade1-3"/>
    <property type="match status" value="1"/>
</dbReference>
<dbReference type="PRINTS" id="PR00067">
    <property type="entry name" value="CATALASE"/>
</dbReference>
<dbReference type="SMART" id="SM01060">
    <property type="entry name" value="Catalase"/>
    <property type="match status" value="1"/>
</dbReference>
<dbReference type="SUPFAM" id="SSF56634">
    <property type="entry name" value="Heme-dependent catalase-like"/>
    <property type="match status" value="1"/>
</dbReference>
<dbReference type="PROSITE" id="PS00437">
    <property type="entry name" value="CATALASE_1"/>
    <property type="match status" value="1"/>
</dbReference>
<dbReference type="PROSITE" id="PS00438">
    <property type="entry name" value="CATALASE_2"/>
    <property type="match status" value="1"/>
</dbReference>
<dbReference type="PROSITE" id="PS51402">
    <property type="entry name" value="CATALASE_3"/>
    <property type="match status" value="1"/>
</dbReference>
<accession>D4AK44</accession>
<feature type="chain" id="PRO_0000439123" description="Catalase easC">
    <location>
        <begin position="1"/>
        <end position="478"/>
    </location>
</feature>
<feature type="region of interest" description="Disordered" evidence="2">
    <location>
        <begin position="459"/>
        <end position="478"/>
    </location>
</feature>
<feature type="active site" evidence="1">
    <location>
        <position position="54"/>
    </location>
</feature>
<feature type="binding site" description="axial binding residue" evidence="1">
    <location>
        <position position="343"/>
    </location>
    <ligand>
        <name>heme</name>
        <dbReference type="ChEBI" id="CHEBI:30413"/>
    </ligand>
    <ligandPart>
        <name>Fe</name>
        <dbReference type="ChEBI" id="CHEBI:18248"/>
    </ligandPart>
</feature>
<name>EASC_ARTBC</name>
<organism>
    <name type="scientific">Arthroderma benhamiae (strain ATCC MYA-4681 / CBS 112371)</name>
    <name type="common">Trichophyton mentagrophytes</name>
    <dbReference type="NCBI Taxonomy" id="663331"/>
    <lineage>
        <taxon>Eukaryota</taxon>
        <taxon>Fungi</taxon>
        <taxon>Dikarya</taxon>
        <taxon>Ascomycota</taxon>
        <taxon>Pezizomycotina</taxon>
        <taxon>Eurotiomycetes</taxon>
        <taxon>Eurotiomycetidae</taxon>
        <taxon>Onygenales</taxon>
        <taxon>Arthrodermataceae</taxon>
        <taxon>Trichophyton</taxon>
    </lineage>
</organism>
<evidence type="ECO:0000250" key="1">
    <source>
        <dbReference type="UniProtKB" id="P15202"/>
    </source>
</evidence>
<evidence type="ECO:0000256" key="2">
    <source>
        <dbReference type="SAM" id="MobiDB-lite"/>
    </source>
</evidence>
<evidence type="ECO:0000269" key="3">
    <source>
    </source>
</evidence>
<evidence type="ECO:0000303" key="4">
    <source>
    </source>
</evidence>
<evidence type="ECO:0000305" key="5"/>
<evidence type="ECO:0000305" key="6">
    <source>
    </source>
</evidence>
<comment type="function">
    <text evidence="3">Catalase; part of the gene cluster that mediates the biosynthesis of fungal ergot alkaloid (PubMed:22403186). DmaW catalyzes the first step of ergot alkaloid biosynthesis by condensing dimethylallyl diphosphate (DMAP) and tryptophan to form 4-dimethylallyl-L-tryptophan (PubMed:22403186). The second step is catalyzed by the methyltransferase easF that methylates 4-dimethylallyl-L-tryptophan in the presence of S-adenosyl-L-methionine, resulting in the formation of 4-dimethylallyl-L-abrine (PubMed:22403186). The catalase easC and the FAD-dependent oxidoreductase easE then transform 4-dimethylallyl-L-abrine to chanoclavine-I which is further oxidized by easD in the presence of NAD(+), resulting in the formation of chanoclavine-I aldehyde (PubMed:22403186). Chanoclavine-I aldehyde is the precursor of ergoamides and ergopeptines in Clavicipitaceae, and clavine-type alcaloids such as fumiclavine in Trichocomaceae (PubMed:22403186). However, the metabolites downstream of chanoclavine-I aldehyde in Arthrodermataceae have not been identified yet (PubMed:22403186).</text>
</comment>
<comment type="cofactor">
    <cofactor evidence="1">
        <name>heme</name>
        <dbReference type="ChEBI" id="CHEBI:30413"/>
    </cofactor>
</comment>
<comment type="pathway">
    <text evidence="6">Alkaloid biosynthesis; ergot alkaloid biosynthesis.</text>
</comment>
<comment type="similarity">
    <text evidence="5">Belongs to the catalase family.</text>
</comment>